<dbReference type="EC" id="2.8.1.13" evidence="1"/>
<dbReference type="EMBL" id="AM422018">
    <property type="protein sequence ID" value="CAM12100.1"/>
    <property type="molecule type" value="Genomic_DNA"/>
</dbReference>
<dbReference type="SMR" id="B1VAX7"/>
<dbReference type="STRING" id="59748.PA0766"/>
<dbReference type="KEGG" id="pal:PA0766"/>
<dbReference type="eggNOG" id="COG0482">
    <property type="taxonomic scope" value="Bacteria"/>
</dbReference>
<dbReference type="Proteomes" id="UP000008323">
    <property type="component" value="Chromosome"/>
</dbReference>
<dbReference type="GO" id="GO:0005737">
    <property type="term" value="C:cytoplasm"/>
    <property type="evidence" value="ECO:0007669"/>
    <property type="project" value="UniProtKB-SubCell"/>
</dbReference>
<dbReference type="GO" id="GO:0005524">
    <property type="term" value="F:ATP binding"/>
    <property type="evidence" value="ECO:0007669"/>
    <property type="project" value="UniProtKB-KW"/>
</dbReference>
<dbReference type="GO" id="GO:0000049">
    <property type="term" value="F:tRNA binding"/>
    <property type="evidence" value="ECO:0007669"/>
    <property type="project" value="UniProtKB-KW"/>
</dbReference>
<dbReference type="GO" id="GO:0103016">
    <property type="term" value="F:tRNA-uridine 2-sulfurtransferase activity"/>
    <property type="evidence" value="ECO:0007669"/>
    <property type="project" value="UniProtKB-EC"/>
</dbReference>
<dbReference type="GO" id="GO:0002143">
    <property type="term" value="P:tRNA wobble position uridine thiolation"/>
    <property type="evidence" value="ECO:0007669"/>
    <property type="project" value="TreeGrafter"/>
</dbReference>
<dbReference type="CDD" id="cd01998">
    <property type="entry name" value="MnmA_TRMU-like"/>
    <property type="match status" value="1"/>
</dbReference>
<dbReference type="FunFam" id="3.40.50.620:FF:000104">
    <property type="entry name" value="Mitochondrial tRNA-specific 2-thiouridylase 1"/>
    <property type="match status" value="1"/>
</dbReference>
<dbReference type="FunFam" id="2.30.30.280:FF:000001">
    <property type="entry name" value="tRNA-specific 2-thiouridylase MnmA"/>
    <property type="match status" value="1"/>
</dbReference>
<dbReference type="Gene3D" id="2.30.30.280">
    <property type="entry name" value="Adenine nucleotide alpha hydrolases-like domains"/>
    <property type="match status" value="1"/>
</dbReference>
<dbReference type="Gene3D" id="3.40.50.620">
    <property type="entry name" value="HUPs"/>
    <property type="match status" value="1"/>
</dbReference>
<dbReference type="Gene3D" id="2.40.30.10">
    <property type="entry name" value="Translation factors"/>
    <property type="match status" value="1"/>
</dbReference>
<dbReference type="HAMAP" id="MF_00144">
    <property type="entry name" value="tRNA_thiouridyl_MnmA"/>
    <property type="match status" value="1"/>
</dbReference>
<dbReference type="InterPro" id="IPR004506">
    <property type="entry name" value="MnmA-like"/>
</dbReference>
<dbReference type="InterPro" id="IPR046885">
    <property type="entry name" value="MnmA-like_C"/>
</dbReference>
<dbReference type="InterPro" id="IPR046884">
    <property type="entry name" value="MnmA-like_central"/>
</dbReference>
<dbReference type="InterPro" id="IPR023382">
    <property type="entry name" value="MnmA-like_central_sf"/>
</dbReference>
<dbReference type="InterPro" id="IPR014729">
    <property type="entry name" value="Rossmann-like_a/b/a_fold"/>
</dbReference>
<dbReference type="NCBIfam" id="NF001138">
    <property type="entry name" value="PRK00143.1"/>
    <property type="match status" value="1"/>
</dbReference>
<dbReference type="NCBIfam" id="TIGR00420">
    <property type="entry name" value="trmU"/>
    <property type="match status" value="1"/>
</dbReference>
<dbReference type="PANTHER" id="PTHR11933:SF5">
    <property type="entry name" value="MITOCHONDRIAL TRNA-SPECIFIC 2-THIOURIDYLASE 1"/>
    <property type="match status" value="1"/>
</dbReference>
<dbReference type="PANTHER" id="PTHR11933">
    <property type="entry name" value="TRNA 5-METHYLAMINOMETHYL-2-THIOURIDYLATE -METHYLTRANSFERASE"/>
    <property type="match status" value="1"/>
</dbReference>
<dbReference type="Pfam" id="PF03054">
    <property type="entry name" value="tRNA_Me_trans"/>
    <property type="match status" value="1"/>
</dbReference>
<dbReference type="Pfam" id="PF20258">
    <property type="entry name" value="tRNA_Me_trans_C"/>
    <property type="match status" value="1"/>
</dbReference>
<dbReference type="Pfam" id="PF20259">
    <property type="entry name" value="tRNA_Me_trans_M"/>
    <property type="match status" value="1"/>
</dbReference>
<dbReference type="SUPFAM" id="SSF52402">
    <property type="entry name" value="Adenine nucleotide alpha hydrolases-like"/>
    <property type="match status" value="1"/>
</dbReference>
<proteinExistence type="inferred from homology"/>
<accession>B1VAX7</accession>
<organism>
    <name type="scientific">Phytoplasma australiense</name>
    <dbReference type="NCBI Taxonomy" id="59748"/>
    <lineage>
        <taxon>Bacteria</taxon>
        <taxon>Bacillati</taxon>
        <taxon>Mycoplasmatota</taxon>
        <taxon>Mollicutes</taxon>
        <taxon>Acholeplasmatales</taxon>
        <taxon>Acholeplasmataceae</taxon>
        <taxon>Candidatus Phytoplasma</taxon>
        <taxon>16SrXII (Stolbur group)</taxon>
    </lineage>
</organism>
<name>MNMA_PHYAS</name>
<sequence length="375" mass="43003">MKKVVVGLSGGVDSAVSALLLKKAGYEVEAVFMRNWDSQLNFDFQGNPTLNDVCPQELDYKDALKVSLQLGIKLHRVNFIEEYWQKVFLYFINAFKNNLTPNPDILCNNEIKFKAFINYATSKLKPQYIAMGHYARLIYDKNQKVSLACPLDKNKDQTYFLSQLKTSQLKNILFPLADLTKKEVRKIALENGLINACKKDSTGICFIGERNFFQFLNNYLPAQKGSIKRLDGTFLTYHKGVIHYTIGQRKNLGLGNFSSGQEPFFVVGKNLKTNTLYVEPNSQHPHLYSDRALIIDVTWRGEKTKTQIQAKMRYRQPNQKVTLNWLDANTLEILYPQKIKAVTPGQICAFYDDDICLGAGVIKEVYFQNQKRLYT</sequence>
<evidence type="ECO:0000255" key="1">
    <source>
        <dbReference type="HAMAP-Rule" id="MF_00144"/>
    </source>
</evidence>
<keyword id="KW-0067">ATP-binding</keyword>
<keyword id="KW-0963">Cytoplasm</keyword>
<keyword id="KW-1015">Disulfide bond</keyword>
<keyword id="KW-0547">Nucleotide-binding</keyword>
<keyword id="KW-1185">Reference proteome</keyword>
<keyword id="KW-0694">RNA-binding</keyword>
<keyword id="KW-0808">Transferase</keyword>
<keyword id="KW-0819">tRNA processing</keyword>
<keyword id="KW-0820">tRNA-binding</keyword>
<protein>
    <recommendedName>
        <fullName evidence="1">tRNA-specific 2-thiouridylase MnmA</fullName>
        <ecNumber evidence="1">2.8.1.13</ecNumber>
    </recommendedName>
</protein>
<gene>
    <name evidence="1" type="primary">mnmA</name>
    <name type="ordered locus">PA0766</name>
</gene>
<reference key="1">
    <citation type="journal article" date="2008" name="J. Bacteriol.">
        <title>Comparative genome analysis of 'Candidatus Phytoplasma australiense' (subgroup tuf-Australia I; rp-A) and 'Ca. Phytoplasma asteris' strains OY-M and AY-WB.</title>
        <authorList>
            <person name="Tran-Nguyen L.T."/>
            <person name="Kube M."/>
            <person name="Schneider B."/>
            <person name="Reinhardt R."/>
            <person name="Gibb K.S."/>
        </authorList>
    </citation>
    <scope>NUCLEOTIDE SEQUENCE [LARGE SCALE GENOMIC DNA]</scope>
</reference>
<comment type="function">
    <text evidence="1">Catalyzes the 2-thiolation of uridine at the wobble position (U34) of tRNA, leading to the formation of s(2)U34.</text>
</comment>
<comment type="catalytic activity">
    <reaction evidence="1">
        <text>S-sulfanyl-L-cysteinyl-[protein] + uridine(34) in tRNA + AH2 + ATP = 2-thiouridine(34) in tRNA + L-cysteinyl-[protein] + A + AMP + diphosphate + H(+)</text>
        <dbReference type="Rhea" id="RHEA:47032"/>
        <dbReference type="Rhea" id="RHEA-COMP:10131"/>
        <dbReference type="Rhea" id="RHEA-COMP:11726"/>
        <dbReference type="Rhea" id="RHEA-COMP:11727"/>
        <dbReference type="Rhea" id="RHEA-COMP:11728"/>
        <dbReference type="ChEBI" id="CHEBI:13193"/>
        <dbReference type="ChEBI" id="CHEBI:15378"/>
        <dbReference type="ChEBI" id="CHEBI:17499"/>
        <dbReference type="ChEBI" id="CHEBI:29950"/>
        <dbReference type="ChEBI" id="CHEBI:30616"/>
        <dbReference type="ChEBI" id="CHEBI:33019"/>
        <dbReference type="ChEBI" id="CHEBI:61963"/>
        <dbReference type="ChEBI" id="CHEBI:65315"/>
        <dbReference type="ChEBI" id="CHEBI:87170"/>
        <dbReference type="ChEBI" id="CHEBI:456215"/>
        <dbReference type="EC" id="2.8.1.13"/>
    </reaction>
</comment>
<comment type="subcellular location">
    <subcellularLocation>
        <location evidence="1">Cytoplasm</location>
    </subcellularLocation>
</comment>
<comment type="similarity">
    <text evidence="1">Belongs to the MnmA/TRMU family.</text>
</comment>
<feature type="chain" id="PRO_1000198619" description="tRNA-specific 2-thiouridylase MnmA">
    <location>
        <begin position="1"/>
        <end position="375"/>
    </location>
</feature>
<feature type="region of interest" description="Interaction with target base in tRNA" evidence="1">
    <location>
        <begin position="102"/>
        <end position="104"/>
    </location>
</feature>
<feature type="region of interest" description="Interaction with tRNA" evidence="1">
    <location>
        <begin position="155"/>
        <end position="157"/>
    </location>
</feature>
<feature type="region of interest" description="Interaction with tRNA" evidence="1">
    <location>
        <begin position="313"/>
        <end position="314"/>
    </location>
</feature>
<feature type="active site" description="Nucleophile" evidence="1">
    <location>
        <position position="107"/>
    </location>
</feature>
<feature type="active site" description="Cysteine persulfide intermediate" evidence="1">
    <location>
        <position position="205"/>
    </location>
</feature>
<feature type="binding site" evidence="1">
    <location>
        <begin position="7"/>
        <end position="14"/>
    </location>
    <ligand>
        <name>ATP</name>
        <dbReference type="ChEBI" id="CHEBI:30616"/>
    </ligand>
</feature>
<feature type="binding site" evidence="1">
    <location>
        <position position="33"/>
    </location>
    <ligand>
        <name>ATP</name>
        <dbReference type="ChEBI" id="CHEBI:30616"/>
    </ligand>
</feature>
<feature type="binding site" evidence="1">
    <location>
        <position position="132"/>
    </location>
    <ligand>
        <name>ATP</name>
        <dbReference type="ChEBI" id="CHEBI:30616"/>
    </ligand>
</feature>
<feature type="site" description="Interaction with tRNA" evidence="1">
    <location>
        <position position="133"/>
    </location>
</feature>
<feature type="site" description="Interaction with tRNA" evidence="1">
    <location>
        <position position="346"/>
    </location>
</feature>
<feature type="disulfide bond" description="Alternate" evidence="1">
    <location>
        <begin position="107"/>
        <end position="205"/>
    </location>
</feature>